<reference key="1">
    <citation type="journal article" date="1998" name="Nature">
        <title>Deciphering the biology of Mycobacterium tuberculosis from the complete genome sequence.</title>
        <authorList>
            <person name="Cole S.T."/>
            <person name="Brosch R."/>
            <person name="Parkhill J."/>
            <person name="Garnier T."/>
            <person name="Churcher C.M."/>
            <person name="Harris D.E."/>
            <person name="Gordon S.V."/>
            <person name="Eiglmeier K."/>
            <person name="Gas S."/>
            <person name="Barry C.E. III"/>
            <person name="Tekaia F."/>
            <person name="Badcock K."/>
            <person name="Basham D."/>
            <person name="Brown D."/>
            <person name="Chillingworth T."/>
            <person name="Connor R."/>
            <person name="Davies R.M."/>
            <person name="Devlin K."/>
            <person name="Feltwell T."/>
            <person name="Gentles S."/>
            <person name="Hamlin N."/>
            <person name="Holroyd S."/>
            <person name="Hornsby T."/>
            <person name="Jagels K."/>
            <person name="Krogh A."/>
            <person name="McLean J."/>
            <person name="Moule S."/>
            <person name="Murphy L.D."/>
            <person name="Oliver S."/>
            <person name="Osborne J."/>
            <person name="Quail M.A."/>
            <person name="Rajandream M.A."/>
            <person name="Rogers J."/>
            <person name="Rutter S."/>
            <person name="Seeger K."/>
            <person name="Skelton S."/>
            <person name="Squares S."/>
            <person name="Squares R."/>
            <person name="Sulston J.E."/>
            <person name="Taylor K."/>
            <person name="Whitehead S."/>
            <person name="Barrell B.G."/>
        </authorList>
    </citation>
    <scope>NUCLEOTIDE SEQUENCE [LARGE SCALE GENOMIC DNA]</scope>
    <source>
        <strain>ATCC 25618 / H37Rv</strain>
    </source>
</reference>
<reference key="2">
    <citation type="journal article" date="2011" name="Mol. Cell. Proteomics">
        <title>Proteogenomic analysis of Mycobacterium tuberculosis by high resolution mass spectrometry.</title>
        <authorList>
            <person name="Kelkar D.S."/>
            <person name="Kumar D."/>
            <person name="Kumar P."/>
            <person name="Balakrishnan L."/>
            <person name="Muthusamy B."/>
            <person name="Yadav A.K."/>
            <person name="Shrivastava P."/>
            <person name="Marimuthu A."/>
            <person name="Anand S."/>
            <person name="Sundaram H."/>
            <person name="Kingsbury R."/>
            <person name="Harsha H.C."/>
            <person name="Nair B."/>
            <person name="Prasad T.S."/>
            <person name="Chauhan D.S."/>
            <person name="Katoch K."/>
            <person name="Katoch V.M."/>
            <person name="Kumar P."/>
            <person name="Chaerkady R."/>
            <person name="Ramachandran S."/>
            <person name="Dash D."/>
            <person name="Pandey A."/>
        </authorList>
    </citation>
    <scope>IDENTIFICATION BY MASS SPECTROMETRY [LARGE SCALE ANALYSIS]</scope>
    <source>
        <strain>ATCC 25618 / H37Rv</strain>
    </source>
</reference>
<protein>
    <recommendedName>
        <fullName>Uncharacterized protein Rv1260</fullName>
    </recommendedName>
</protein>
<sequence>MKTVVVSGASVAGTAAAYWLGRHGYSVTMVERHPGLRPGGQAIDVRGPALDVLERMGLLAAAQEHKTRIRGASFVDRDGNELFRDTESTPTGGPVNSPDIELLRDDLVELLYGATQPSVEYLFDDSISTLQDDGDSVRVTFERAAAREFDLVIGADGLHSNVRRLVFGPEEQFVKRLGTHAAIFTVPNFLELDYWQTWHYGDSTMAGVYSARNNTEARAALAFMDTELRIDYRDTEAQFAELQRRMAEDGWVRAQLLHYMRSAPDFYFDEMSQILMDRWSRGRVALVGDAGYCCSPLSGQGTSVALLGAYILAGELKAAGDDYQLGFANYHAEFHGFVERNQWLVSDNIPGGAPIPQEEFERIVHSITIKDY</sequence>
<dbReference type="EMBL" id="AL123456">
    <property type="protein sequence ID" value="CCP44016.1"/>
    <property type="molecule type" value="Genomic_DNA"/>
</dbReference>
<dbReference type="PIR" id="D70753">
    <property type="entry name" value="D70753"/>
</dbReference>
<dbReference type="RefSeq" id="NP_215776.1">
    <property type="nucleotide sequence ID" value="NC_000962.3"/>
</dbReference>
<dbReference type="RefSeq" id="WP_003406361.1">
    <property type="nucleotide sequence ID" value="NZ_NVQJ01000049.1"/>
</dbReference>
<dbReference type="SMR" id="P9WM51"/>
<dbReference type="FunCoup" id="P9WM51">
    <property type="interactions" value="29"/>
</dbReference>
<dbReference type="STRING" id="83332.Rv1260"/>
<dbReference type="PaxDb" id="83332-Rv1260"/>
<dbReference type="DNASU" id="887044"/>
<dbReference type="GeneID" id="887044"/>
<dbReference type="KEGG" id="mtu:Rv1260"/>
<dbReference type="KEGG" id="mtv:RVBD_1260"/>
<dbReference type="TubercuList" id="Rv1260"/>
<dbReference type="eggNOG" id="COG0654">
    <property type="taxonomic scope" value="Bacteria"/>
</dbReference>
<dbReference type="InParanoid" id="P9WM51"/>
<dbReference type="OrthoDB" id="3356051at2"/>
<dbReference type="PhylomeDB" id="P9WM51"/>
<dbReference type="Proteomes" id="UP000001584">
    <property type="component" value="Chromosome"/>
</dbReference>
<dbReference type="GO" id="GO:0071949">
    <property type="term" value="F:FAD binding"/>
    <property type="evidence" value="ECO:0007669"/>
    <property type="project" value="InterPro"/>
</dbReference>
<dbReference type="Gene3D" id="3.30.9.10">
    <property type="entry name" value="D-Amino Acid Oxidase, subunit A, domain 2"/>
    <property type="match status" value="1"/>
</dbReference>
<dbReference type="Gene3D" id="3.50.50.60">
    <property type="entry name" value="FAD/NAD(P)-binding domain"/>
    <property type="match status" value="1"/>
</dbReference>
<dbReference type="InterPro" id="IPR002938">
    <property type="entry name" value="FAD-bd"/>
</dbReference>
<dbReference type="InterPro" id="IPR036188">
    <property type="entry name" value="FAD/NAD-bd_sf"/>
</dbReference>
<dbReference type="InterPro" id="IPR051704">
    <property type="entry name" value="FAD_aromatic-hydroxylase"/>
</dbReference>
<dbReference type="NCBIfam" id="NF004523">
    <property type="entry name" value="PRK05868.1"/>
    <property type="match status" value="1"/>
</dbReference>
<dbReference type="PANTHER" id="PTHR46865:SF2">
    <property type="entry name" value="MONOOXYGENASE"/>
    <property type="match status" value="1"/>
</dbReference>
<dbReference type="PANTHER" id="PTHR46865">
    <property type="entry name" value="OXIDOREDUCTASE-RELATED"/>
    <property type="match status" value="1"/>
</dbReference>
<dbReference type="Pfam" id="PF01494">
    <property type="entry name" value="FAD_binding_3"/>
    <property type="match status" value="1"/>
</dbReference>
<dbReference type="PRINTS" id="PR00420">
    <property type="entry name" value="RNGMNOXGNASE"/>
</dbReference>
<dbReference type="SUPFAM" id="SSF51905">
    <property type="entry name" value="FAD/NAD(P)-binding domain"/>
    <property type="match status" value="1"/>
</dbReference>
<proteinExistence type="evidence at protein level"/>
<name>Y1260_MYCTU</name>
<organism>
    <name type="scientific">Mycobacterium tuberculosis (strain ATCC 25618 / H37Rv)</name>
    <dbReference type="NCBI Taxonomy" id="83332"/>
    <lineage>
        <taxon>Bacteria</taxon>
        <taxon>Bacillati</taxon>
        <taxon>Actinomycetota</taxon>
        <taxon>Actinomycetes</taxon>
        <taxon>Mycobacteriales</taxon>
        <taxon>Mycobacteriaceae</taxon>
        <taxon>Mycobacterium</taxon>
        <taxon>Mycobacterium tuberculosis complex</taxon>
    </lineage>
</organism>
<keyword id="KW-1185">Reference proteome</keyword>
<gene>
    <name type="ordered locus">Rv1260</name>
    <name type="ORF">MTCY50.22c</name>
</gene>
<accession>P9WM51</accession>
<accession>L0T646</accession>
<accession>Q11058</accession>
<feature type="chain" id="PRO_0000103777" description="Uncharacterized protein Rv1260">
    <location>
        <begin position="1"/>
        <end position="372"/>
    </location>
</feature>